<reference key="1">
    <citation type="submission" date="2006-05" db="EMBL/GenBank/DDBJ databases">
        <title>Complete sequence of chromosome 1 of Burkholderia cenocepacia AU 1054.</title>
        <authorList>
            <consortium name="US DOE Joint Genome Institute"/>
            <person name="Copeland A."/>
            <person name="Lucas S."/>
            <person name="Lapidus A."/>
            <person name="Barry K."/>
            <person name="Detter J.C."/>
            <person name="Glavina del Rio T."/>
            <person name="Hammon N."/>
            <person name="Israni S."/>
            <person name="Dalin E."/>
            <person name="Tice H."/>
            <person name="Pitluck S."/>
            <person name="Chain P."/>
            <person name="Malfatti S."/>
            <person name="Shin M."/>
            <person name="Vergez L."/>
            <person name="Schmutz J."/>
            <person name="Larimer F."/>
            <person name="Land M."/>
            <person name="Hauser L."/>
            <person name="Kyrpides N."/>
            <person name="Lykidis A."/>
            <person name="LiPuma J.J."/>
            <person name="Konstantinidis K."/>
            <person name="Tiedje J.M."/>
            <person name="Richardson P."/>
        </authorList>
    </citation>
    <scope>NUCLEOTIDE SEQUENCE [LARGE SCALE GENOMIC DNA]</scope>
    <source>
        <strain>AU 1054</strain>
    </source>
</reference>
<dbReference type="EC" id="2.7.7.23" evidence="1"/>
<dbReference type="EC" id="2.3.1.157" evidence="1"/>
<dbReference type="EMBL" id="CP000378">
    <property type="protein sequence ID" value="ABF77267.1"/>
    <property type="molecule type" value="Genomic_DNA"/>
</dbReference>
<dbReference type="SMR" id="Q1BSY8"/>
<dbReference type="HOGENOM" id="CLU_029499_15_2_4"/>
<dbReference type="UniPathway" id="UPA00113">
    <property type="reaction ID" value="UER00532"/>
</dbReference>
<dbReference type="UniPathway" id="UPA00113">
    <property type="reaction ID" value="UER00533"/>
</dbReference>
<dbReference type="UniPathway" id="UPA00973"/>
<dbReference type="GO" id="GO:0005737">
    <property type="term" value="C:cytoplasm"/>
    <property type="evidence" value="ECO:0007669"/>
    <property type="project" value="UniProtKB-SubCell"/>
</dbReference>
<dbReference type="GO" id="GO:0016020">
    <property type="term" value="C:membrane"/>
    <property type="evidence" value="ECO:0007669"/>
    <property type="project" value="GOC"/>
</dbReference>
<dbReference type="GO" id="GO:0019134">
    <property type="term" value="F:glucosamine-1-phosphate N-acetyltransferase activity"/>
    <property type="evidence" value="ECO:0007669"/>
    <property type="project" value="UniProtKB-UniRule"/>
</dbReference>
<dbReference type="GO" id="GO:0000287">
    <property type="term" value="F:magnesium ion binding"/>
    <property type="evidence" value="ECO:0007669"/>
    <property type="project" value="UniProtKB-UniRule"/>
</dbReference>
<dbReference type="GO" id="GO:0003977">
    <property type="term" value="F:UDP-N-acetylglucosamine diphosphorylase activity"/>
    <property type="evidence" value="ECO:0007669"/>
    <property type="project" value="UniProtKB-UniRule"/>
</dbReference>
<dbReference type="GO" id="GO:0000902">
    <property type="term" value="P:cell morphogenesis"/>
    <property type="evidence" value="ECO:0007669"/>
    <property type="project" value="UniProtKB-UniRule"/>
</dbReference>
<dbReference type="GO" id="GO:0071555">
    <property type="term" value="P:cell wall organization"/>
    <property type="evidence" value="ECO:0007669"/>
    <property type="project" value="UniProtKB-KW"/>
</dbReference>
<dbReference type="GO" id="GO:0009245">
    <property type="term" value="P:lipid A biosynthetic process"/>
    <property type="evidence" value="ECO:0007669"/>
    <property type="project" value="UniProtKB-UniRule"/>
</dbReference>
<dbReference type="GO" id="GO:0009252">
    <property type="term" value="P:peptidoglycan biosynthetic process"/>
    <property type="evidence" value="ECO:0007669"/>
    <property type="project" value="UniProtKB-UniRule"/>
</dbReference>
<dbReference type="GO" id="GO:0008360">
    <property type="term" value="P:regulation of cell shape"/>
    <property type="evidence" value="ECO:0007669"/>
    <property type="project" value="UniProtKB-KW"/>
</dbReference>
<dbReference type="GO" id="GO:0006048">
    <property type="term" value="P:UDP-N-acetylglucosamine biosynthetic process"/>
    <property type="evidence" value="ECO:0007669"/>
    <property type="project" value="UniProtKB-UniPathway"/>
</dbReference>
<dbReference type="CDD" id="cd02540">
    <property type="entry name" value="GT2_GlmU_N_bac"/>
    <property type="match status" value="1"/>
</dbReference>
<dbReference type="CDD" id="cd03353">
    <property type="entry name" value="LbH_GlmU_C"/>
    <property type="match status" value="1"/>
</dbReference>
<dbReference type="Gene3D" id="2.160.10.10">
    <property type="entry name" value="Hexapeptide repeat proteins"/>
    <property type="match status" value="1"/>
</dbReference>
<dbReference type="Gene3D" id="3.90.550.10">
    <property type="entry name" value="Spore Coat Polysaccharide Biosynthesis Protein SpsA, Chain A"/>
    <property type="match status" value="1"/>
</dbReference>
<dbReference type="HAMAP" id="MF_01631">
    <property type="entry name" value="GlmU"/>
    <property type="match status" value="1"/>
</dbReference>
<dbReference type="InterPro" id="IPR005882">
    <property type="entry name" value="Bifunctional_GlmU"/>
</dbReference>
<dbReference type="InterPro" id="IPR050065">
    <property type="entry name" value="GlmU-like"/>
</dbReference>
<dbReference type="InterPro" id="IPR038009">
    <property type="entry name" value="GlmU_C_LbH"/>
</dbReference>
<dbReference type="InterPro" id="IPR001451">
    <property type="entry name" value="Hexapep"/>
</dbReference>
<dbReference type="InterPro" id="IPR018357">
    <property type="entry name" value="Hexapep_transf_CS"/>
</dbReference>
<dbReference type="InterPro" id="IPR025877">
    <property type="entry name" value="MobA-like_NTP_Trfase"/>
</dbReference>
<dbReference type="InterPro" id="IPR029044">
    <property type="entry name" value="Nucleotide-diphossugar_trans"/>
</dbReference>
<dbReference type="InterPro" id="IPR011004">
    <property type="entry name" value="Trimer_LpxA-like_sf"/>
</dbReference>
<dbReference type="NCBIfam" id="TIGR01173">
    <property type="entry name" value="glmU"/>
    <property type="match status" value="1"/>
</dbReference>
<dbReference type="PANTHER" id="PTHR43584:SF3">
    <property type="entry name" value="BIFUNCTIONAL PROTEIN GLMU"/>
    <property type="match status" value="1"/>
</dbReference>
<dbReference type="PANTHER" id="PTHR43584">
    <property type="entry name" value="NUCLEOTIDYL TRANSFERASE"/>
    <property type="match status" value="1"/>
</dbReference>
<dbReference type="Pfam" id="PF00132">
    <property type="entry name" value="Hexapep"/>
    <property type="match status" value="2"/>
</dbReference>
<dbReference type="Pfam" id="PF12804">
    <property type="entry name" value="NTP_transf_3"/>
    <property type="match status" value="1"/>
</dbReference>
<dbReference type="SUPFAM" id="SSF53448">
    <property type="entry name" value="Nucleotide-diphospho-sugar transferases"/>
    <property type="match status" value="1"/>
</dbReference>
<dbReference type="SUPFAM" id="SSF51161">
    <property type="entry name" value="Trimeric LpxA-like enzymes"/>
    <property type="match status" value="1"/>
</dbReference>
<dbReference type="PROSITE" id="PS00101">
    <property type="entry name" value="HEXAPEP_TRANSFERASES"/>
    <property type="match status" value="2"/>
</dbReference>
<proteinExistence type="inferred from homology"/>
<protein>
    <recommendedName>
        <fullName evidence="1">Bifunctional protein GlmU</fullName>
    </recommendedName>
    <domain>
        <recommendedName>
            <fullName evidence="1">UDP-N-acetylglucosamine pyrophosphorylase</fullName>
            <ecNumber evidence="1">2.7.7.23</ecNumber>
        </recommendedName>
        <alternativeName>
            <fullName evidence="1">N-acetylglucosamine-1-phosphate uridyltransferase</fullName>
        </alternativeName>
    </domain>
    <domain>
        <recommendedName>
            <fullName evidence="1">Glucosamine-1-phosphate N-acetyltransferase</fullName>
            <ecNumber evidence="1">2.3.1.157</ecNumber>
        </recommendedName>
    </domain>
</protein>
<sequence>MNIVILAAGTGKRMRSALPKVLHPLAGRPLLSHVIDTARTLQPSRLVVVVGHGAEQVKAAVAAPDVQFAVQAEQLGTGHAVRQALPLLDPAQPTLVLYGDVPLTRASTLQRLVDAARDGRYGILTVTLDDPTGYGRIVRDASGFVTRIVEQKDASPEELKIAEINTGIIVTPTAQLSMWLGALKNENAQGEYYLTDVVELAIEAGFEVVTSQPDDEWETLGVNSKAQLAELERIHQRNVADALLVDGVTLADPARVDVRGTLRCGRDVSIDVNCVFEGNVTIADNVTIGANCVIRNASVGAGTRIDAFTHIDGAELGANTVIGPYARLRPGAQLADEAHVGNFVEVKNAVIGHGSKANHLTYIGDADIGARVNIGAGTITCNYDGANKFRTVIEDDVFVGSDTQLVAPVRVGRGVTIAAGTTIWKDVAEGVLALNEKTQTAKSGYVRPVKKKS</sequence>
<organism>
    <name type="scientific">Burkholderia orbicola (strain AU 1054)</name>
    <dbReference type="NCBI Taxonomy" id="331271"/>
    <lineage>
        <taxon>Bacteria</taxon>
        <taxon>Pseudomonadati</taxon>
        <taxon>Pseudomonadota</taxon>
        <taxon>Betaproteobacteria</taxon>
        <taxon>Burkholderiales</taxon>
        <taxon>Burkholderiaceae</taxon>
        <taxon>Burkholderia</taxon>
        <taxon>Burkholderia cepacia complex</taxon>
        <taxon>Burkholderia orbicola</taxon>
    </lineage>
</organism>
<gene>
    <name evidence="1" type="primary">glmU</name>
    <name type="ordered locus">Bcen_2367</name>
</gene>
<keyword id="KW-0012">Acyltransferase</keyword>
<keyword id="KW-0133">Cell shape</keyword>
<keyword id="KW-0961">Cell wall biogenesis/degradation</keyword>
<keyword id="KW-0963">Cytoplasm</keyword>
<keyword id="KW-0460">Magnesium</keyword>
<keyword id="KW-0479">Metal-binding</keyword>
<keyword id="KW-0511">Multifunctional enzyme</keyword>
<keyword id="KW-0548">Nucleotidyltransferase</keyword>
<keyword id="KW-0573">Peptidoglycan synthesis</keyword>
<keyword id="KW-0677">Repeat</keyword>
<keyword id="KW-0808">Transferase</keyword>
<name>GLMU_BURO1</name>
<feature type="chain" id="PRO_0000263120" description="Bifunctional protein GlmU">
    <location>
        <begin position="1"/>
        <end position="453"/>
    </location>
</feature>
<feature type="region of interest" description="Pyrophosphorylase" evidence="1">
    <location>
        <begin position="1"/>
        <end position="225"/>
    </location>
</feature>
<feature type="region of interest" description="Linker" evidence="1">
    <location>
        <begin position="226"/>
        <end position="246"/>
    </location>
</feature>
<feature type="region of interest" description="N-acetyltransferase" evidence="1">
    <location>
        <begin position="247"/>
        <end position="453"/>
    </location>
</feature>
<feature type="active site" description="Proton acceptor" evidence="1">
    <location>
        <position position="359"/>
    </location>
</feature>
<feature type="binding site" evidence="1">
    <location>
        <begin position="6"/>
        <end position="9"/>
    </location>
    <ligand>
        <name>UDP-N-acetyl-alpha-D-glucosamine</name>
        <dbReference type="ChEBI" id="CHEBI:57705"/>
    </ligand>
</feature>
<feature type="binding site" evidence="1">
    <location>
        <position position="20"/>
    </location>
    <ligand>
        <name>UDP-N-acetyl-alpha-D-glucosamine</name>
        <dbReference type="ChEBI" id="CHEBI:57705"/>
    </ligand>
</feature>
<feature type="binding site" evidence="1">
    <location>
        <position position="71"/>
    </location>
    <ligand>
        <name>UDP-N-acetyl-alpha-D-glucosamine</name>
        <dbReference type="ChEBI" id="CHEBI:57705"/>
    </ligand>
</feature>
<feature type="binding site" evidence="1">
    <location>
        <begin position="76"/>
        <end position="77"/>
    </location>
    <ligand>
        <name>UDP-N-acetyl-alpha-D-glucosamine</name>
        <dbReference type="ChEBI" id="CHEBI:57705"/>
    </ligand>
</feature>
<feature type="binding site" evidence="1">
    <location>
        <begin position="98"/>
        <end position="100"/>
    </location>
    <ligand>
        <name>UDP-N-acetyl-alpha-D-glucosamine</name>
        <dbReference type="ChEBI" id="CHEBI:57705"/>
    </ligand>
</feature>
<feature type="binding site" evidence="1">
    <location>
        <position position="100"/>
    </location>
    <ligand>
        <name>Mg(2+)</name>
        <dbReference type="ChEBI" id="CHEBI:18420"/>
    </ligand>
</feature>
<feature type="binding site" evidence="1">
    <location>
        <position position="135"/>
    </location>
    <ligand>
        <name>UDP-N-acetyl-alpha-D-glucosamine</name>
        <dbReference type="ChEBI" id="CHEBI:57705"/>
    </ligand>
</feature>
<feature type="binding site" evidence="1">
    <location>
        <position position="150"/>
    </location>
    <ligand>
        <name>UDP-N-acetyl-alpha-D-glucosamine</name>
        <dbReference type="ChEBI" id="CHEBI:57705"/>
    </ligand>
</feature>
<feature type="binding site" evidence="1">
    <location>
        <position position="165"/>
    </location>
    <ligand>
        <name>UDP-N-acetyl-alpha-D-glucosamine</name>
        <dbReference type="ChEBI" id="CHEBI:57705"/>
    </ligand>
</feature>
<feature type="binding site" evidence="1">
    <location>
        <position position="223"/>
    </location>
    <ligand>
        <name>Mg(2+)</name>
        <dbReference type="ChEBI" id="CHEBI:18420"/>
    </ligand>
</feature>
<feature type="binding site" evidence="1">
    <location>
        <position position="223"/>
    </location>
    <ligand>
        <name>UDP-N-acetyl-alpha-D-glucosamine</name>
        <dbReference type="ChEBI" id="CHEBI:57705"/>
    </ligand>
</feature>
<feature type="binding site" evidence="1">
    <location>
        <position position="329"/>
    </location>
    <ligand>
        <name>UDP-N-acetyl-alpha-D-glucosamine</name>
        <dbReference type="ChEBI" id="CHEBI:57705"/>
    </ligand>
</feature>
<feature type="binding site" evidence="1">
    <location>
        <position position="347"/>
    </location>
    <ligand>
        <name>UDP-N-acetyl-alpha-D-glucosamine</name>
        <dbReference type="ChEBI" id="CHEBI:57705"/>
    </ligand>
</feature>
<feature type="binding site" evidence="1">
    <location>
        <position position="362"/>
    </location>
    <ligand>
        <name>UDP-N-acetyl-alpha-D-glucosamine</name>
        <dbReference type="ChEBI" id="CHEBI:57705"/>
    </ligand>
</feature>
<feature type="binding site" evidence="1">
    <location>
        <position position="373"/>
    </location>
    <ligand>
        <name>UDP-N-acetyl-alpha-D-glucosamine</name>
        <dbReference type="ChEBI" id="CHEBI:57705"/>
    </ligand>
</feature>
<feature type="binding site" evidence="1">
    <location>
        <position position="376"/>
    </location>
    <ligand>
        <name>acetyl-CoA</name>
        <dbReference type="ChEBI" id="CHEBI:57288"/>
    </ligand>
</feature>
<feature type="binding site" evidence="1">
    <location>
        <begin position="382"/>
        <end position="383"/>
    </location>
    <ligand>
        <name>acetyl-CoA</name>
        <dbReference type="ChEBI" id="CHEBI:57288"/>
    </ligand>
</feature>
<feature type="binding site" evidence="1">
    <location>
        <position position="401"/>
    </location>
    <ligand>
        <name>acetyl-CoA</name>
        <dbReference type="ChEBI" id="CHEBI:57288"/>
    </ligand>
</feature>
<feature type="binding site" evidence="1">
    <location>
        <position position="419"/>
    </location>
    <ligand>
        <name>acetyl-CoA</name>
        <dbReference type="ChEBI" id="CHEBI:57288"/>
    </ligand>
</feature>
<comment type="function">
    <text evidence="1">Catalyzes the last two sequential reactions in the de novo biosynthetic pathway for UDP-N-acetylglucosamine (UDP-GlcNAc). The C-terminal domain catalyzes the transfer of acetyl group from acetyl coenzyme A to glucosamine-1-phosphate (GlcN-1-P) to produce N-acetylglucosamine-1-phosphate (GlcNAc-1-P), which is converted into UDP-GlcNAc by the transfer of uridine 5-monophosphate (from uridine 5-triphosphate), a reaction catalyzed by the N-terminal domain.</text>
</comment>
<comment type="catalytic activity">
    <reaction evidence="1">
        <text>alpha-D-glucosamine 1-phosphate + acetyl-CoA = N-acetyl-alpha-D-glucosamine 1-phosphate + CoA + H(+)</text>
        <dbReference type="Rhea" id="RHEA:13725"/>
        <dbReference type="ChEBI" id="CHEBI:15378"/>
        <dbReference type="ChEBI" id="CHEBI:57287"/>
        <dbReference type="ChEBI" id="CHEBI:57288"/>
        <dbReference type="ChEBI" id="CHEBI:57776"/>
        <dbReference type="ChEBI" id="CHEBI:58516"/>
        <dbReference type="EC" id="2.3.1.157"/>
    </reaction>
</comment>
<comment type="catalytic activity">
    <reaction evidence="1">
        <text>N-acetyl-alpha-D-glucosamine 1-phosphate + UTP + H(+) = UDP-N-acetyl-alpha-D-glucosamine + diphosphate</text>
        <dbReference type="Rhea" id="RHEA:13509"/>
        <dbReference type="ChEBI" id="CHEBI:15378"/>
        <dbReference type="ChEBI" id="CHEBI:33019"/>
        <dbReference type="ChEBI" id="CHEBI:46398"/>
        <dbReference type="ChEBI" id="CHEBI:57705"/>
        <dbReference type="ChEBI" id="CHEBI:57776"/>
        <dbReference type="EC" id="2.7.7.23"/>
    </reaction>
</comment>
<comment type="cofactor">
    <cofactor evidence="1">
        <name>Mg(2+)</name>
        <dbReference type="ChEBI" id="CHEBI:18420"/>
    </cofactor>
    <text evidence="1">Binds 1 Mg(2+) ion per subunit.</text>
</comment>
<comment type="pathway">
    <text evidence="1">Nucleotide-sugar biosynthesis; UDP-N-acetyl-alpha-D-glucosamine biosynthesis; N-acetyl-alpha-D-glucosamine 1-phosphate from alpha-D-glucosamine 6-phosphate (route II): step 2/2.</text>
</comment>
<comment type="pathway">
    <text evidence="1">Nucleotide-sugar biosynthesis; UDP-N-acetyl-alpha-D-glucosamine biosynthesis; UDP-N-acetyl-alpha-D-glucosamine from N-acetyl-alpha-D-glucosamine 1-phosphate: step 1/1.</text>
</comment>
<comment type="pathway">
    <text evidence="1">Bacterial outer membrane biogenesis; LPS lipid A biosynthesis.</text>
</comment>
<comment type="subunit">
    <text evidence="1">Homotrimer.</text>
</comment>
<comment type="subcellular location">
    <subcellularLocation>
        <location evidence="1">Cytoplasm</location>
    </subcellularLocation>
</comment>
<comment type="similarity">
    <text evidence="1">In the N-terminal section; belongs to the N-acetylglucosamine-1-phosphate uridyltransferase family.</text>
</comment>
<comment type="similarity">
    <text evidence="1">In the C-terminal section; belongs to the transferase hexapeptide repeat family.</text>
</comment>
<accession>Q1BSY8</accession>
<evidence type="ECO:0000255" key="1">
    <source>
        <dbReference type="HAMAP-Rule" id="MF_01631"/>
    </source>
</evidence>